<feature type="chain" id="PRO_1000005270" description="Small ribosomal subunit protein bS6">
    <location>
        <begin position="1"/>
        <end position="125"/>
    </location>
</feature>
<feature type="region of interest" description="Disordered" evidence="2">
    <location>
        <begin position="96"/>
        <end position="125"/>
    </location>
</feature>
<feature type="compositionally biased region" description="Basic and acidic residues" evidence="2">
    <location>
        <begin position="104"/>
        <end position="113"/>
    </location>
</feature>
<feature type="compositionally biased region" description="Acidic residues" evidence="2">
    <location>
        <begin position="116"/>
        <end position="125"/>
    </location>
</feature>
<gene>
    <name evidence="1" type="primary">rpsF</name>
    <name type="ordered locus">CGSHiGG_05995</name>
</gene>
<keyword id="KW-0687">Ribonucleoprotein</keyword>
<keyword id="KW-0689">Ribosomal protein</keyword>
<keyword id="KW-0694">RNA-binding</keyword>
<keyword id="KW-0699">rRNA-binding</keyword>
<accession>A5UH52</accession>
<evidence type="ECO:0000255" key="1">
    <source>
        <dbReference type="HAMAP-Rule" id="MF_00360"/>
    </source>
</evidence>
<evidence type="ECO:0000256" key="2">
    <source>
        <dbReference type="SAM" id="MobiDB-lite"/>
    </source>
</evidence>
<evidence type="ECO:0000305" key="3"/>
<name>RS6_HAEIG</name>
<sequence>MRHYEIVFMVHPDQSEQVPGMIERYTGSVKEAGGQVHRLEDWGRRQLAYPINKLHKAHYVLMNVEAPQQVIDELETTFRYNDAVLRSLVIHTKHAVTEASPMKAAKEERKPLAEVENNDFEDAEE</sequence>
<organism>
    <name type="scientific">Haemophilus influenzae (strain PittGG)</name>
    <dbReference type="NCBI Taxonomy" id="374931"/>
    <lineage>
        <taxon>Bacteria</taxon>
        <taxon>Pseudomonadati</taxon>
        <taxon>Pseudomonadota</taxon>
        <taxon>Gammaproteobacteria</taxon>
        <taxon>Pasteurellales</taxon>
        <taxon>Pasteurellaceae</taxon>
        <taxon>Haemophilus</taxon>
    </lineage>
</organism>
<dbReference type="EMBL" id="CP000672">
    <property type="protein sequence ID" value="ABR00108.1"/>
    <property type="molecule type" value="Genomic_DNA"/>
</dbReference>
<dbReference type="SMR" id="A5UH52"/>
<dbReference type="KEGG" id="hiq:CGSHiGG_05995"/>
<dbReference type="HOGENOM" id="CLU_113441_6_1_6"/>
<dbReference type="Proteomes" id="UP000001990">
    <property type="component" value="Chromosome"/>
</dbReference>
<dbReference type="GO" id="GO:0022627">
    <property type="term" value="C:cytosolic small ribosomal subunit"/>
    <property type="evidence" value="ECO:0007669"/>
    <property type="project" value="TreeGrafter"/>
</dbReference>
<dbReference type="GO" id="GO:0070181">
    <property type="term" value="F:small ribosomal subunit rRNA binding"/>
    <property type="evidence" value="ECO:0007669"/>
    <property type="project" value="TreeGrafter"/>
</dbReference>
<dbReference type="GO" id="GO:0003735">
    <property type="term" value="F:structural constituent of ribosome"/>
    <property type="evidence" value="ECO:0007669"/>
    <property type="project" value="InterPro"/>
</dbReference>
<dbReference type="GO" id="GO:0006412">
    <property type="term" value="P:translation"/>
    <property type="evidence" value="ECO:0007669"/>
    <property type="project" value="UniProtKB-UniRule"/>
</dbReference>
<dbReference type="CDD" id="cd00473">
    <property type="entry name" value="bS6"/>
    <property type="match status" value="1"/>
</dbReference>
<dbReference type="FunFam" id="3.30.70.60:FF:000003">
    <property type="entry name" value="30S ribosomal protein S6"/>
    <property type="match status" value="1"/>
</dbReference>
<dbReference type="Gene3D" id="3.30.70.60">
    <property type="match status" value="1"/>
</dbReference>
<dbReference type="HAMAP" id="MF_00360">
    <property type="entry name" value="Ribosomal_bS6"/>
    <property type="match status" value="1"/>
</dbReference>
<dbReference type="InterPro" id="IPR000529">
    <property type="entry name" value="Ribosomal_bS6"/>
</dbReference>
<dbReference type="InterPro" id="IPR020815">
    <property type="entry name" value="Ribosomal_bS6_CS"/>
</dbReference>
<dbReference type="InterPro" id="IPR035980">
    <property type="entry name" value="Ribosomal_bS6_sf"/>
</dbReference>
<dbReference type="InterPro" id="IPR020814">
    <property type="entry name" value="Ribosomal_S6_plastid/chlpt"/>
</dbReference>
<dbReference type="InterPro" id="IPR014717">
    <property type="entry name" value="Transl_elong_EF1B/ribsomal_bS6"/>
</dbReference>
<dbReference type="NCBIfam" id="TIGR00166">
    <property type="entry name" value="S6"/>
    <property type="match status" value="1"/>
</dbReference>
<dbReference type="PANTHER" id="PTHR21011">
    <property type="entry name" value="MITOCHONDRIAL 28S RIBOSOMAL PROTEIN S6"/>
    <property type="match status" value="1"/>
</dbReference>
<dbReference type="PANTHER" id="PTHR21011:SF1">
    <property type="entry name" value="SMALL RIBOSOMAL SUBUNIT PROTEIN BS6M"/>
    <property type="match status" value="1"/>
</dbReference>
<dbReference type="Pfam" id="PF01250">
    <property type="entry name" value="Ribosomal_S6"/>
    <property type="match status" value="1"/>
</dbReference>
<dbReference type="SUPFAM" id="SSF54995">
    <property type="entry name" value="Ribosomal protein S6"/>
    <property type="match status" value="1"/>
</dbReference>
<dbReference type="PROSITE" id="PS01048">
    <property type="entry name" value="RIBOSOMAL_S6"/>
    <property type="match status" value="1"/>
</dbReference>
<comment type="function">
    <text evidence="1">Binds together with bS18 to 16S ribosomal RNA.</text>
</comment>
<comment type="similarity">
    <text evidence="1">Belongs to the bacterial ribosomal protein bS6 family.</text>
</comment>
<reference key="1">
    <citation type="journal article" date="2007" name="Genome Biol.">
        <title>Characterization and modeling of the Haemophilus influenzae core and supragenomes based on the complete genomic sequences of Rd and 12 clinical nontypeable strains.</title>
        <authorList>
            <person name="Hogg J.S."/>
            <person name="Hu F.Z."/>
            <person name="Janto B."/>
            <person name="Boissy R."/>
            <person name="Hayes J."/>
            <person name="Keefe R."/>
            <person name="Post J.C."/>
            <person name="Ehrlich G.D."/>
        </authorList>
    </citation>
    <scope>NUCLEOTIDE SEQUENCE [LARGE SCALE GENOMIC DNA]</scope>
    <source>
        <strain>PittGG</strain>
    </source>
</reference>
<proteinExistence type="inferred from homology"/>
<protein>
    <recommendedName>
        <fullName evidence="1">Small ribosomal subunit protein bS6</fullName>
    </recommendedName>
    <alternativeName>
        <fullName evidence="3">30S ribosomal protein S6</fullName>
    </alternativeName>
</protein>